<sequence length="492" mass="53017">MTLWINGDWITGQGERRRKTNPVSAEILWQGNDANAAQVAEACQAARAAFPRWARQPFAARQAIVEKFAALLEAHKAELTEVIARETGKPRWEAATEVTAMINKIAISIKAYHARTGAQKSELVDGAATLRHRPHGVLAVFGPYNFPGHLPNGHIVPALLAGNTLIFKPSELTPWTGETVIKLWERAGLPAGVLNLVQGGRETGQALSSLDDLDGLLFTGSASTGYQLHRQLSGQPEKILALEMGGNNPLIIEDAANIDAAVHLTLQSAFITAGQRCTCARRLLVKQGAQGDAFLARLVDVAGRLQPGRWDDDPQPFIGGLISAQAAQHVMEAWRQREALGGRTLLAPRKVKEGTSLLTPGIIELTGVADVPDEEVFGPLLNVWRYAHFDEAIRLANNTRFGLSCGLVSTDRAQFEQLLLEARAGIVNWNKPLTGAASTAPFGGVGASGNHRPSAWYAADYCAWPMASLESPELTLPATLSPGLDFSRREAV</sequence>
<evidence type="ECO:0000255" key="1">
    <source>
        <dbReference type="HAMAP-Rule" id="MF_01174"/>
    </source>
</evidence>
<evidence type="ECO:0000269" key="2">
    <source>
    </source>
</evidence>
<comment type="function">
    <text evidence="1">Catalyzes the NAD-dependent reduction of succinylglutamate semialdehyde into succinylglutamate.</text>
</comment>
<comment type="catalytic activity">
    <reaction evidence="1">
        <text>N-succinyl-L-glutamate 5-semialdehyde + NAD(+) + H2O = N-succinyl-L-glutamate + NADH + 2 H(+)</text>
        <dbReference type="Rhea" id="RHEA:10812"/>
        <dbReference type="ChEBI" id="CHEBI:15377"/>
        <dbReference type="ChEBI" id="CHEBI:15378"/>
        <dbReference type="ChEBI" id="CHEBI:57540"/>
        <dbReference type="ChEBI" id="CHEBI:57945"/>
        <dbReference type="ChEBI" id="CHEBI:58520"/>
        <dbReference type="ChEBI" id="CHEBI:58763"/>
        <dbReference type="EC" id="1.2.1.71"/>
    </reaction>
</comment>
<comment type="pathway">
    <text evidence="1">Amino-acid degradation; L-arginine degradation via AST pathway; L-glutamate and succinate from L-arginine: step 4/5.</text>
</comment>
<comment type="induction">
    <text evidence="2">By nitrogen and carbon starvation, and arginine, via the ArgR and Crp transcriptional regulators.</text>
</comment>
<comment type="similarity">
    <text evidence="1">Belongs to the aldehyde dehydrogenase family. AstD subfamily.</text>
</comment>
<proteinExistence type="evidence at transcript level"/>
<keyword id="KW-0056">Arginine metabolism</keyword>
<keyword id="KW-0520">NAD</keyword>
<keyword id="KW-0560">Oxidoreductase</keyword>
<keyword id="KW-1185">Reference proteome</keyword>
<reference key="1">
    <citation type="journal article" date="2001" name="Nature">
        <title>Complete genome sequence of Salmonella enterica serovar Typhimurium LT2.</title>
        <authorList>
            <person name="McClelland M."/>
            <person name="Sanderson K.E."/>
            <person name="Spieth J."/>
            <person name="Clifton S.W."/>
            <person name="Latreille P."/>
            <person name="Courtney L."/>
            <person name="Porwollik S."/>
            <person name="Ali J."/>
            <person name="Dante M."/>
            <person name="Du F."/>
            <person name="Hou S."/>
            <person name="Layman D."/>
            <person name="Leonard S."/>
            <person name="Nguyen C."/>
            <person name="Scott K."/>
            <person name="Holmes A."/>
            <person name="Grewal N."/>
            <person name="Mulvaney E."/>
            <person name="Ryan E."/>
            <person name="Sun H."/>
            <person name="Florea L."/>
            <person name="Miller W."/>
            <person name="Stoneking T."/>
            <person name="Nhan M."/>
            <person name="Waterston R."/>
            <person name="Wilson R.K."/>
        </authorList>
    </citation>
    <scope>NUCLEOTIDE SEQUENCE [LARGE SCALE GENOMIC DNA]</scope>
    <source>
        <strain>LT2 / SGSC1412 / ATCC 700720</strain>
    </source>
</reference>
<reference key="2">
    <citation type="journal article" date="1999" name="J. Bacteriol.">
        <title>Role of ArgR in activation of the ast operon, encoding enzymes of the arginine succinyltransferase pathway in Salmonella typhimurium.</title>
        <authorList>
            <person name="Lu C.-D."/>
            <person name="Abdelal A.T."/>
        </authorList>
    </citation>
    <scope>INDUCTION</scope>
</reference>
<accession>Q8ZPV0</accession>
<protein>
    <recommendedName>
        <fullName evidence="1">N-succinylglutamate 5-semialdehyde dehydrogenase</fullName>
        <ecNumber evidence="1">1.2.1.71</ecNumber>
    </recommendedName>
    <alternativeName>
        <fullName evidence="1">Succinylglutamic semialdehyde dehydrogenase</fullName>
        <shortName evidence="1">SGSD</shortName>
    </alternativeName>
</protein>
<feature type="chain" id="PRO_0000262422" description="N-succinylglutamate 5-semialdehyde dehydrogenase">
    <location>
        <begin position="1"/>
        <end position="492"/>
    </location>
</feature>
<feature type="active site" evidence="1">
    <location>
        <position position="243"/>
    </location>
</feature>
<feature type="active site" evidence="1">
    <location>
        <position position="277"/>
    </location>
</feature>
<feature type="binding site" evidence="1">
    <location>
        <begin position="220"/>
        <end position="225"/>
    </location>
    <ligand>
        <name>NAD(+)</name>
        <dbReference type="ChEBI" id="CHEBI:57540"/>
    </ligand>
</feature>
<name>ASTD_SALTY</name>
<dbReference type="EC" id="1.2.1.71" evidence="1"/>
<dbReference type="EMBL" id="AE006468">
    <property type="protein sequence ID" value="AAL20230.1"/>
    <property type="molecule type" value="Genomic_DNA"/>
</dbReference>
<dbReference type="RefSeq" id="NP_460271.1">
    <property type="nucleotide sequence ID" value="NC_003197.2"/>
</dbReference>
<dbReference type="RefSeq" id="WP_000177268.1">
    <property type="nucleotide sequence ID" value="NC_003197.2"/>
</dbReference>
<dbReference type="SMR" id="Q8ZPV0"/>
<dbReference type="STRING" id="99287.STM1305"/>
<dbReference type="PaxDb" id="99287-STM1305"/>
<dbReference type="GeneID" id="1252823"/>
<dbReference type="KEGG" id="stm:STM1305"/>
<dbReference type="PATRIC" id="fig|99287.12.peg.1387"/>
<dbReference type="HOGENOM" id="CLU_005391_1_0_6"/>
<dbReference type="OMA" id="LIPAAWD"/>
<dbReference type="PhylomeDB" id="Q8ZPV0"/>
<dbReference type="BioCyc" id="SENT99287:STM1305-MONOMER"/>
<dbReference type="UniPathway" id="UPA00185">
    <property type="reaction ID" value="UER00282"/>
</dbReference>
<dbReference type="Proteomes" id="UP000001014">
    <property type="component" value="Chromosome"/>
</dbReference>
<dbReference type="GO" id="GO:0043824">
    <property type="term" value="F:succinylglutamate-semialdehyde dehydrogenase activity"/>
    <property type="evidence" value="ECO:0007669"/>
    <property type="project" value="UniProtKB-EC"/>
</dbReference>
<dbReference type="GO" id="GO:0019544">
    <property type="term" value="P:arginine catabolic process to glutamate"/>
    <property type="evidence" value="ECO:0007669"/>
    <property type="project" value="UniProtKB-UniRule"/>
</dbReference>
<dbReference type="GO" id="GO:0019545">
    <property type="term" value="P:arginine catabolic process to succinate"/>
    <property type="evidence" value="ECO:0007669"/>
    <property type="project" value="UniProtKB-UniRule"/>
</dbReference>
<dbReference type="CDD" id="cd07095">
    <property type="entry name" value="ALDH_SGSD_AstD"/>
    <property type="match status" value="1"/>
</dbReference>
<dbReference type="FunFam" id="3.40.309.10:FF:000013">
    <property type="entry name" value="N-succinylglutamate 5-semialdehyde dehydrogenase"/>
    <property type="match status" value="1"/>
</dbReference>
<dbReference type="FunFam" id="3.40.605.10:FF:000010">
    <property type="entry name" value="N-succinylglutamate 5-semialdehyde dehydrogenase"/>
    <property type="match status" value="1"/>
</dbReference>
<dbReference type="Gene3D" id="3.40.605.10">
    <property type="entry name" value="Aldehyde Dehydrogenase, Chain A, domain 1"/>
    <property type="match status" value="1"/>
</dbReference>
<dbReference type="Gene3D" id="3.40.309.10">
    <property type="entry name" value="Aldehyde Dehydrogenase, Chain A, domain 2"/>
    <property type="match status" value="1"/>
</dbReference>
<dbReference type="HAMAP" id="MF_01174">
    <property type="entry name" value="Aldedh_AstD"/>
    <property type="match status" value="1"/>
</dbReference>
<dbReference type="InterPro" id="IPR016161">
    <property type="entry name" value="Ald_DH/histidinol_DH"/>
</dbReference>
<dbReference type="InterPro" id="IPR016163">
    <property type="entry name" value="Ald_DH_C"/>
</dbReference>
<dbReference type="InterPro" id="IPR016160">
    <property type="entry name" value="Ald_DH_CS_CYS"/>
</dbReference>
<dbReference type="InterPro" id="IPR029510">
    <property type="entry name" value="Ald_DH_CS_GLU"/>
</dbReference>
<dbReference type="InterPro" id="IPR016162">
    <property type="entry name" value="Ald_DH_N"/>
</dbReference>
<dbReference type="InterPro" id="IPR015590">
    <property type="entry name" value="Aldehyde_DH_dom"/>
</dbReference>
<dbReference type="InterPro" id="IPR017649">
    <property type="entry name" value="SuccinylGlu_semiald_DH_AstD"/>
</dbReference>
<dbReference type="NCBIfam" id="TIGR03240">
    <property type="entry name" value="arg_catab_astD"/>
    <property type="match status" value="1"/>
</dbReference>
<dbReference type="NCBIfam" id="NF006992">
    <property type="entry name" value="PRK09457.1"/>
    <property type="match status" value="1"/>
</dbReference>
<dbReference type="PANTHER" id="PTHR11699">
    <property type="entry name" value="ALDEHYDE DEHYDROGENASE-RELATED"/>
    <property type="match status" value="1"/>
</dbReference>
<dbReference type="Pfam" id="PF00171">
    <property type="entry name" value="Aldedh"/>
    <property type="match status" value="1"/>
</dbReference>
<dbReference type="SUPFAM" id="SSF53720">
    <property type="entry name" value="ALDH-like"/>
    <property type="match status" value="1"/>
</dbReference>
<dbReference type="PROSITE" id="PS00070">
    <property type="entry name" value="ALDEHYDE_DEHYDR_CYS"/>
    <property type="match status" value="1"/>
</dbReference>
<dbReference type="PROSITE" id="PS00687">
    <property type="entry name" value="ALDEHYDE_DEHYDR_GLU"/>
    <property type="match status" value="1"/>
</dbReference>
<organism>
    <name type="scientific">Salmonella typhimurium (strain LT2 / SGSC1412 / ATCC 700720)</name>
    <dbReference type="NCBI Taxonomy" id="99287"/>
    <lineage>
        <taxon>Bacteria</taxon>
        <taxon>Pseudomonadati</taxon>
        <taxon>Pseudomonadota</taxon>
        <taxon>Gammaproteobacteria</taxon>
        <taxon>Enterobacterales</taxon>
        <taxon>Enterobacteriaceae</taxon>
        <taxon>Salmonella</taxon>
    </lineage>
</organism>
<gene>
    <name evidence="1" type="primary">astD</name>
    <name type="ordered locus">STM1305</name>
</gene>